<dbReference type="EC" id="1.1.1.86" evidence="1"/>
<dbReference type="EMBL" id="CP000923">
    <property type="protein sequence ID" value="ABY91337.1"/>
    <property type="molecule type" value="Genomic_DNA"/>
</dbReference>
<dbReference type="RefSeq" id="WP_009052046.1">
    <property type="nucleotide sequence ID" value="NC_010320.1"/>
</dbReference>
<dbReference type="SMR" id="B0K0Y0"/>
<dbReference type="KEGG" id="tex:Teth514_0013"/>
<dbReference type="HOGENOM" id="CLU_033821_0_1_9"/>
<dbReference type="UniPathway" id="UPA00047">
    <property type="reaction ID" value="UER00056"/>
</dbReference>
<dbReference type="UniPathway" id="UPA00049">
    <property type="reaction ID" value="UER00060"/>
</dbReference>
<dbReference type="Proteomes" id="UP000002155">
    <property type="component" value="Chromosome"/>
</dbReference>
<dbReference type="GO" id="GO:0005829">
    <property type="term" value="C:cytosol"/>
    <property type="evidence" value="ECO:0007669"/>
    <property type="project" value="TreeGrafter"/>
</dbReference>
<dbReference type="GO" id="GO:0004455">
    <property type="term" value="F:ketol-acid reductoisomerase activity"/>
    <property type="evidence" value="ECO:0007669"/>
    <property type="project" value="UniProtKB-UniRule"/>
</dbReference>
<dbReference type="GO" id="GO:0000287">
    <property type="term" value="F:magnesium ion binding"/>
    <property type="evidence" value="ECO:0007669"/>
    <property type="project" value="UniProtKB-UniRule"/>
</dbReference>
<dbReference type="GO" id="GO:0050661">
    <property type="term" value="F:NADP binding"/>
    <property type="evidence" value="ECO:0007669"/>
    <property type="project" value="InterPro"/>
</dbReference>
<dbReference type="GO" id="GO:0009097">
    <property type="term" value="P:isoleucine biosynthetic process"/>
    <property type="evidence" value="ECO:0007669"/>
    <property type="project" value="UniProtKB-UniRule"/>
</dbReference>
<dbReference type="GO" id="GO:0009099">
    <property type="term" value="P:L-valine biosynthetic process"/>
    <property type="evidence" value="ECO:0007669"/>
    <property type="project" value="UniProtKB-UniRule"/>
</dbReference>
<dbReference type="FunFam" id="3.40.50.720:FF:000023">
    <property type="entry name" value="Ketol-acid reductoisomerase (NADP(+))"/>
    <property type="match status" value="1"/>
</dbReference>
<dbReference type="Gene3D" id="6.10.240.10">
    <property type="match status" value="1"/>
</dbReference>
<dbReference type="Gene3D" id="3.40.50.720">
    <property type="entry name" value="NAD(P)-binding Rossmann-like Domain"/>
    <property type="match status" value="1"/>
</dbReference>
<dbReference type="HAMAP" id="MF_00435">
    <property type="entry name" value="IlvC"/>
    <property type="match status" value="1"/>
</dbReference>
<dbReference type="InterPro" id="IPR008927">
    <property type="entry name" value="6-PGluconate_DH-like_C_sf"/>
</dbReference>
<dbReference type="InterPro" id="IPR003781">
    <property type="entry name" value="CoA-bd"/>
</dbReference>
<dbReference type="InterPro" id="IPR013023">
    <property type="entry name" value="KARI"/>
</dbReference>
<dbReference type="InterPro" id="IPR000506">
    <property type="entry name" value="KARI_C"/>
</dbReference>
<dbReference type="InterPro" id="IPR013116">
    <property type="entry name" value="KARI_N"/>
</dbReference>
<dbReference type="InterPro" id="IPR014359">
    <property type="entry name" value="KARI_prok"/>
</dbReference>
<dbReference type="InterPro" id="IPR036291">
    <property type="entry name" value="NAD(P)-bd_dom_sf"/>
</dbReference>
<dbReference type="NCBIfam" id="TIGR00465">
    <property type="entry name" value="ilvC"/>
    <property type="match status" value="1"/>
</dbReference>
<dbReference type="NCBIfam" id="NF004017">
    <property type="entry name" value="PRK05479.1"/>
    <property type="match status" value="1"/>
</dbReference>
<dbReference type="NCBIfam" id="NF009940">
    <property type="entry name" value="PRK13403.1"/>
    <property type="match status" value="1"/>
</dbReference>
<dbReference type="PANTHER" id="PTHR21371">
    <property type="entry name" value="KETOL-ACID REDUCTOISOMERASE, MITOCHONDRIAL"/>
    <property type="match status" value="1"/>
</dbReference>
<dbReference type="PANTHER" id="PTHR21371:SF1">
    <property type="entry name" value="KETOL-ACID REDUCTOISOMERASE, MITOCHONDRIAL"/>
    <property type="match status" value="1"/>
</dbReference>
<dbReference type="Pfam" id="PF01450">
    <property type="entry name" value="KARI_C"/>
    <property type="match status" value="1"/>
</dbReference>
<dbReference type="Pfam" id="PF07991">
    <property type="entry name" value="KARI_N"/>
    <property type="match status" value="1"/>
</dbReference>
<dbReference type="PIRSF" id="PIRSF000116">
    <property type="entry name" value="IlvC_gammaproteo"/>
    <property type="match status" value="1"/>
</dbReference>
<dbReference type="SMART" id="SM00881">
    <property type="entry name" value="CoA_binding"/>
    <property type="match status" value="1"/>
</dbReference>
<dbReference type="SUPFAM" id="SSF48179">
    <property type="entry name" value="6-phosphogluconate dehydrogenase C-terminal domain-like"/>
    <property type="match status" value="1"/>
</dbReference>
<dbReference type="SUPFAM" id="SSF51735">
    <property type="entry name" value="NAD(P)-binding Rossmann-fold domains"/>
    <property type="match status" value="1"/>
</dbReference>
<dbReference type="PROSITE" id="PS51851">
    <property type="entry name" value="KARI_C"/>
    <property type="match status" value="1"/>
</dbReference>
<dbReference type="PROSITE" id="PS51850">
    <property type="entry name" value="KARI_N"/>
    <property type="match status" value="1"/>
</dbReference>
<evidence type="ECO:0000255" key="1">
    <source>
        <dbReference type="HAMAP-Rule" id="MF_00435"/>
    </source>
</evidence>
<evidence type="ECO:0000255" key="2">
    <source>
        <dbReference type="PROSITE-ProRule" id="PRU01197"/>
    </source>
</evidence>
<evidence type="ECO:0000255" key="3">
    <source>
        <dbReference type="PROSITE-ProRule" id="PRU01198"/>
    </source>
</evidence>
<name>ILVC_THEPX</name>
<comment type="function">
    <text evidence="1">Involved in the biosynthesis of branched-chain amino acids (BCAA). Catalyzes an alkyl-migration followed by a ketol-acid reduction of (S)-2-acetolactate (S2AL) to yield (R)-2,3-dihydroxy-isovalerate. In the isomerase reaction, S2AL is rearranged via a Mg-dependent methyl migration to produce 3-hydroxy-3-methyl-2-ketobutyrate (HMKB). In the reductase reaction, this 2-ketoacid undergoes a metal-dependent reduction by NADPH to yield (R)-2,3-dihydroxy-isovalerate.</text>
</comment>
<comment type="catalytic activity">
    <reaction evidence="1">
        <text>(2R)-2,3-dihydroxy-3-methylbutanoate + NADP(+) = (2S)-2-acetolactate + NADPH + H(+)</text>
        <dbReference type="Rhea" id="RHEA:22068"/>
        <dbReference type="ChEBI" id="CHEBI:15378"/>
        <dbReference type="ChEBI" id="CHEBI:49072"/>
        <dbReference type="ChEBI" id="CHEBI:57783"/>
        <dbReference type="ChEBI" id="CHEBI:58349"/>
        <dbReference type="ChEBI" id="CHEBI:58476"/>
        <dbReference type="EC" id="1.1.1.86"/>
    </reaction>
</comment>
<comment type="catalytic activity">
    <reaction evidence="1">
        <text>(2R,3R)-2,3-dihydroxy-3-methylpentanoate + NADP(+) = (S)-2-ethyl-2-hydroxy-3-oxobutanoate + NADPH + H(+)</text>
        <dbReference type="Rhea" id="RHEA:13493"/>
        <dbReference type="ChEBI" id="CHEBI:15378"/>
        <dbReference type="ChEBI" id="CHEBI:49256"/>
        <dbReference type="ChEBI" id="CHEBI:49258"/>
        <dbReference type="ChEBI" id="CHEBI:57783"/>
        <dbReference type="ChEBI" id="CHEBI:58349"/>
        <dbReference type="EC" id="1.1.1.86"/>
    </reaction>
</comment>
<comment type="cofactor">
    <cofactor evidence="1">
        <name>Mg(2+)</name>
        <dbReference type="ChEBI" id="CHEBI:18420"/>
    </cofactor>
    <text evidence="1">Binds 2 magnesium ions per subunit.</text>
</comment>
<comment type="pathway">
    <text evidence="1">Amino-acid biosynthesis; L-isoleucine biosynthesis; L-isoleucine from 2-oxobutanoate: step 2/4.</text>
</comment>
<comment type="pathway">
    <text evidence="1">Amino-acid biosynthesis; L-valine biosynthesis; L-valine from pyruvate: step 2/4.</text>
</comment>
<comment type="similarity">
    <text evidence="1">Belongs to the ketol-acid reductoisomerase family.</text>
</comment>
<reference key="1">
    <citation type="submission" date="2008-01" db="EMBL/GenBank/DDBJ databases">
        <title>Complete sequence of Thermoanaerobacter sp. X514.</title>
        <authorList>
            <consortium name="US DOE Joint Genome Institute"/>
            <person name="Copeland A."/>
            <person name="Lucas S."/>
            <person name="Lapidus A."/>
            <person name="Barry K."/>
            <person name="Glavina del Rio T."/>
            <person name="Dalin E."/>
            <person name="Tice H."/>
            <person name="Pitluck S."/>
            <person name="Bruce D."/>
            <person name="Goodwin L."/>
            <person name="Saunders E."/>
            <person name="Brettin T."/>
            <person name="Detter J.C."/>
            <person name="Han C."/>
            <person name="Schmutz J."/>
            <person name="Larimer F."/>
            <person name="Land M."/>
            <person name="Hauser L."/>
            <person name="Kyrpides N."/>
            <person name="Kim E."/>
            <person name="Hemme C."/>
            <person name="Fields M.W."/>
            <person name="He Z."/>
            <person name="Zhou J."/>
            <person name="Richardson P."/>
        </authorList>
    </citation>
    <scope>NUCLEOTIDE SEQUENCE [LARGE SCALE GENOMIC DNA]</scope>
    <source>
        <strain>X514</strain>
    </source>
</reference>
<gene>
    <name evidence="1" type="primary">ilvC</name>
    <name type="ordered locus">Teth514_0013</name>
</gene>
<proteinExistence type="inferred from homology"/>
<keyword id="KW-0028">Amino-acid biosynthesis</keyword>
<keyword id="KW-0100">Branched-chain amino acid biosynthesis</keyword>
<keyword id="KW-0460">Magnesium</keyword>
<keyword id="KW-0479">Metal-binding</keyword>
<keyword id="KW-0521">NADP</keyword>
<keyword id="KW-0560">Oxidoreductase</keyword>
<protein>
    <recommendedName>
        <fullName evidence="1">Ketol-acid reductoisomerase (NADP(+))</fullName>
        <shortName evidence="1">KARI</shortName>
        <ecNumber evidence="1">1.1.1.86</ecNumber>
    </recommendedName>
    <alternativeName>
        <fullName evidence="1">Acetohydroxy-acid isomeroreductase</fullName>
        <shortName evidence="1">AHIR</shortName>
    </alternativeName>
    <alternativeName>
        <fullName evidence="1">Alpha-keto-beta-hydroxylacyl reductoisomerase</fullName>
    </alternativeName>
    <alternativeName>
        <fullName evidence="1">Ketol-acid reductoisomerase type 1</fullName>
    </alternativeName>
    <alternativeName>
        <fullName evidence="1">Ketol-acid reductoisomerase type I</fullName>
    </alternativeName>
</protein>
<feature type="chain" id="PRO_1000191008" description="Ketol-acid reductoisomerase (NADP(+))">
    <location>
        <begin position="1"/>
        <end position="331"/>
    </location>
</feature>
<feature type="domain" description="KARI N-terminal Rossmann" evidence="2">
    <location>
        <begin position="2"/>
        <end position="182"/>
    </location>
</feature>
<feature type="domain" description="KARI C-terminal knotted" evidence="3">
    <location>
        <begin position="183"/>
        <end position="328"/>
    </location>
</feature>
<feature type="active site" evidence="1">
    <location>
        <position position="108"/>
    </location>
</feature>
<feature type="binding site" evidence="1">
    <location>
        <begin position="25"/>
        <end position="28"/>
    </location>
    <ligand>
        <name>NADP(+)</name>
        <dbReference type="ChEBI" id="CHEBI:58349"/>
    </ligand>
</feature>
<feature type="binding site" evidence="1">
    <location>
        <position position="51"/>
    </location>
    <ligand>
        <name>NADP(+)</name>
        <dbReference type="ChEBI" id="CHEBI:58349"/>
    </ligand>
</feature>
<feature type="binding site" evidence="1">
    <location>
        <position position="53"/>
    </location>
    <ligand>
        <name>NADP(+)</name>
        <dbReference type="ChEBI" id="CHEBI:58349"/>
    </ligand>
</feature>
<feature type="binding site" evidence="1">
    <location>
        <begin position="83"/>
        <end position="86"/>
    </location>
    <ligand>
        <name>NADP(+)</name>
        <dbReference type="ChEBI" id="CHEBI:58349"/>
    </ligand>
</feature>
<feature type="binding site" evidence="1">
    <location>
        <position position="134"/>
    </location>
    <ligand>
        <name>NADP(+)</name>
        <dbReference type="ChEBI" id="CHEBI:58349"/>
    </ligand>
</feature>
<feature type="binding site" evidence="1">
    <location>
        <position position="191"/>
    </location>
    <ligand>
        <name>Mg(2+)</name>
        <dbReference type="ChEBI" id="CHEBI:18420"/>
        <label>1</label>
    </ligand>
</feature>
<feature type="binding site" evidence="1">
    <location>
        <position position="191"/>
    </location>
    <ligand>
        <name>Mg(2+)</name>
        <dbReference type="ChEBI" id="CHEBI:18420"/>
        <label>2</label>
    </ligand>
</feature>
<feature type="binding site" evidence="1">
    <location>
        <position position="195"/>
    </location>
    <ligand>
        <name>Mg(2+)</name>
        <dbReference type="ChEBI" id="CHEBI:18420"/>
        <label>1</label>
    </ligand>
</feature>
<feature type="binding site" evidence="1">
    <location>
        <position position="227"/>
    </location>
    <ligand>
        <name>Mg(2+)</name>
        <dbReference type="ChEBI" id="CHEBI:18420"/>
        <label>2</label>
    </ligand>
</feature>
<feature type="binding site" evidence="1">
    <location>
        <position position="231"/>
    </location>
    <ligand>
        <name>Mg(2+)</name>
        <dbReference type="ChEBI" id="CHEBI:18420"/>
        <label>2</label>
    </ligand>
</feature>
<feature type="binding site" evidence="1">
    <location>
        <position position="252"/>
    </location>
    <ligand>
        <name>substrate</name>
    </ligand>
</feature>
<accession>B0K0Y0</accession>
<organism>
    <name type="scientific">Thermoanaerobacter sp. (strain X514)</name>
    <dbReference type="NCBI Taxonomy" id="399726"/>
    <lineage>
        <taxon>Bacteria</taxon>
        <taxon>Bacillati</taxon>
        <taxon>Bacillota</taxon>
        <taxon>Clostridia</taxon>
        <taxon>Thermoanaerobacterales</taxon>
        <taxon>Thermoanaerobacteraceae</taxon>
        <taxon>Thermoanaerobacter</taxon>
    </lineage>
</organism>
<sequence>MAKMYYDKDADLNLLKNKKIAIIGFGSQGHAHALNLRDSGLDVIVGLYEGSKSKERAEKEGLRVYTVEEAAKVADIIMMLIPDEKQAKVYKESIEKNLTEGKALAFAHGFNIHFKQIVPPKNVDVFMVAPKGPGHLVRRVYQEGKGVPNLVAVYQDYTGKAFEIALAYAKGIGGTRAGVIETTFKEETETDLFGEQAVLCGGVTELMKAGFETLVEAGYQPEIAYFECVHEMKLIVDLIYEGGFSYMRYSISDTAEFGDYMTGKRIITEETRKEMKKVLSEIQSGKFAKEWLLENQVGRPQYNAIKDKEANHLIEKVGKGLREMMAWIKKE</sequence>